<evidence type="ECO:0000250" key="1"/>
<evidence type="ECO:0000305" key="2"/>
<reference key="1">
    <citation type="journal article" date="1997" name="Nature">
        <title>The complete genome sequence of the Gram-positive bacterium Bacillus subtilis.</title>
        <authorList>
            <person name="Kunst F."/>
            <person name="Ogasawara N."/>
            <person name="Moszer I."/>
            <person name="Albertini A.M."/>
            <person name="Alloni G."/>
            <person name="Azevedo V."/>
            <person name="Bertero M.G."/>
            <person name="Bessieres P."/>
            <person name="Bolotin A."/>
            <person name="Borchert S."/>
            <person name="Borriss R."/>
            <person name="Boursier L."/>
            <person name="Brans A."/>
            <person name="Braun M."/>
            <person name="Brignell S.C."/>
            <person name="Bron S."/>
            <person name="Brouillet S."/>
            <person name="Bruschi C.V."/>
            <person name="Caldwell B."/>
            <person name="Capuano V."/>
            <person name="Carter N.M."/>
            <person name="Choi S.-K."/>
            <person name="Codani J.-J."/>
            <person name="Connerton I.F."/>
            <person name="Cummings N.J."/>
            <person name="Daniel R.A."/>
            <person name="Denizot F."/>
            <person name="Devine K.M."/>
            <person name="Duesterhoeft A."/>
            <person name="Ehrlich S.D."/>
            <person name="Emmerson P.T."/>
            <person name="Entian K.-D."/>
            <person name="Errington J."/>
            <person name="Fabret C."/>
            <person name="Ferrari E."/>
            <person name="Foulger D."/>
            <person name="Fritz C."/>
            <person name="Fujita M."/>
            <person name="Fujita Y."/>
            <person name="Fuma S."/>
            <person name="Galizzi A."/>
            <person name="Galleron N."/>
            <person name="Ghim S.-Y."/>
            <person name="Glaser P."/>
            <person name="Goffeau A."/>
            <person name="Golightly E.J."/>
            <person name="Grandi G."/>
            <person name="Guiseppi G."/>
            <person name="Guy B.J."/>
            <person name="Haga K."/>
            <person name="Haiech J."/>
            <person name="Harwood C.R."/>
            <person name="Henaut A."/>
            <person name="Hilbert H."/>
            <person name="Holsappel S."/>
            <person name="Hosono S."/>
            <person name="Hullo M.-F."/>
            <person name="Itaya M."/>
            <person name="Jones L.-M."/>
            <person name="Joris B."/>
            <person name="Karamata D."/>
            <person name="Kasahara Y."/>
            <person name="Klaerr-Blanchard M."/>
            <person name="Klein C."/>
            <person name="Kobayashi Y."/>
            <person name="Koetter P."/>
            <person name="Koningstein G."/>
            <person name="Krogh S."/>
            <person name="Kumano M."/>
            <person name="Kurita K."/>
            <person name="Lapidus A."/>
            <person name="Lardinois S."/>
            <person name="Lauber J."/>
            <person name="Lazarevic V."/>
            <person name="Lee S.-M."/>
            <person name="Levine A."/>
            <person name="Liu H."/>
            <person name="Masuda S."/>
            <person name="Mauel C."/>
            <person name="Medigue C."/>
            <person name="Medina N."/>
            <person name="Mellado R.P."/>
            <person name="Mizuno M."/>
            <person name="Moestl D."/>
            <person name="Nakai S."/>
            <person name="Noback M."/>
            <person name="Noone D."/>
            <person name="O'Reilly M."/>
            <person name="Ogawa K."/>
            <person name="Ogiwara A."/>
            <person name="Oudega B."/>
            <person name="Park S.-H."/>
            <person name="Parro V."/>
            <person name="Pohl T.M."/>
            <person name="Portetelle D."/>
            <person name="Porwollik S."/>
            <person name="Prescott A.M."/>
            <person name="Presecan E."/>
            <person name="Pujic P."/>
            <person name="Purnelle B."/>
            <person name="Rapoport G."/>
            <person name="Rey M."/>
            <person name="Reynolds S."/>
            <person name="Rieger M."/>
            <person name="Rivolta C."/>
            <person name="Rocha E."/>
            <person name="Roche B."/>
            <person name="Rose M."/>
            <person name="Sadaie Y."/>
            <person name="Sato T."/>
            <person name="Scanlan E."/>
            <person name="Schleich S."/>
            <person name="Schroeter R."/>
            <person name="Scoffone F."/>
            <person name="Sekiguchi J."/>
            <person name="Sekowska A."/>
            <person name="Seror S.J."/>
            <person name="Serror P."/>
            <person name="Shin B.-S."/>
            <person name="Soldo B."/>
            <person name="Sorokin A."/>
            <person name="Tacconi E."/>
            <person name="Takagi T."/>
            <person name="Takahashi H."/>
            <person name="Takemaru K."/>
            <person name="Takeuchi M."/>
            <person name="Tamakoshi A."/>
            <person name="Tanaka T."/>
            <person name="Terpstra P."/>
            <person name="Tognoni A."/>
            <person name="Tosato V."/>
            <person name="Uchiyama S."/>
            <person name="Vandenbol M."/>
            <person name="Vannier F."/>
            <person name="Vassarotti A."/>
            <person name="Viari A."/>
            <person name="Wambutt R."/>
            <person name="Wedler E."/>
            <person name="Wedler H."/>
            <person name="Weitzenegger T."/>
            <person name="Winters P."/>
            <person name="Wipat A."/>
            <person name="Yamamoto H."/>
            <person name="Yamane K."/>
            <person name="Yasumoto K."/>
            <person name="Yata K."/>
            <person name="Yoshida K."/>
            <person name="Yoshikawa H.-F."/>
            <person name="Zumstein E."/>
            <person name="Yoshikawa H."/>
            <person name="Danchin A."/>
        </authorList>
    </citation>
    <scope>NUCLEOTIDE SEQUENCE [LARGE SCALE GENOMIC DNA]</scope>
    <source>
        <strain>168</strain>
    </source>
</reference>
<sequence length="129" mass="14655">MTYESKTGNVKRFVKALQQEFDVEAIEITDDTIINQEFIHITYTIGFGEVPERTLSFINKNKNKIRGVAVSGNKVWGDNYGLAGDKLSAKFHTPLLLKFELSGTKQDLQKIIQEVQLIDKHNTKLDQAQ</sequence>
<comment type="function">
    <text evidence="1">Probably involved in ribonucleotide reductase function.</text>
</comment>
<comment type="similarity">
    <text evidence="2">Belongs to the NrdI family.</text>
</comment>
<accession>P68524</accession>
<accession>O31876</accession>
<accession>O64172</accession>
<gene>
    <name type="primary">nrdIB</name>
    <name type="synonym">yosM</name>
    <name type="ordered locus">BSU20070</name>
</gene>
<feature type="chain" id="PRO_0000164306" description="SPbeta prophage-derived protein NrdI">
    <location>
        <begin position="1"/>
        <end position="129"/>
    </location>
</feature>
<keyword id="KW-1185">Reference proteome</keyword>
<organism>
    <name type="scientific">Bacillus subtilis (strain 168)</name>
    <dbReference type="NCBI Taxonomy" id="224308"/>
    <lineage>
        <taxon>Bacteria</taxon>
        <taxon>Bacillati</taxon>
        <taxon>Bacillota</taxon>
        <taxon>Bacilli</taxon>
        <taxon>Bacillales</taxon>
        <taxon>Bacillaceae</taxon>
        <taxon>Bacillus</taxon>
    </lineage>
</organism>
<proteinExistence type="inferred from homology"/>
<protein>
    <recommendedName>
        <fullName>SPbeta prophage-derived protein NrdI</fullName>
        <shortName>BnrdI</shortName>
    </recommendedName>
</protein>
<name>NRDIB_BACSU</name>
<dbReference type="EMBL" id="AL009126">
    <property type="protein sequence ID" value="CAB13899.1"/>
    <property type="molecule type" value="Genomic_DNA"/>
</dbReference>
<dbReference type="PIR" id="T12924">
    <property type="entry name" value="T12924"/>
</dbReference>
<dbReference type="RefSeq" id="NP_389889.1">
    <property type="nucleotide sequence ID" value="NC_000964.3"/>
</dbReference>
<dbReference type="SMR" id="P68524"/>
<dbReference type="FunCoup" id="P68524">
    <property type="interactions" value="74"/>
</dbReference>
<dbReference type="STRING" id="224308.BSU20070"/>
<dbReference type="PaxDb" id="224308-BSU20070"/>
<dbReference type="EnsemblBacteria" id="CAB13899">
    <property type="protein sequence ID" value="CAB13899"/>
    <property type="gene ID" value="BSU_20070"/>
</dbReference>
<dbReference type="GeneID" id="939562"/>
<dbReference type="KEGG" id="bsu:BSU20070"/>
<dbReference type="PATRIC" id="fig|224308.43.peg.2122"/>
<dbReference type="eggNOG" id="COG1780">
    <property type="taxonomic scope" value="Bacteria"/>
</dbReference>
<dbReference type="InParanoid" id="P68524"/>
<dbReference type="OrthoDB" id="350535at2"/>
<dbReference type="PhylomeDB" id="P68524"/>
<dbReference type="BioCyc" id="BSUB:BSU20070-MONOMER"/>
<dbReference type="Proteomes" id="UP000001570">
    <property type="component" value="Chromosome"/>
</dbReference>
<dbReference type="GO" id="GO:0010181">
    <property type="term" value="F:FMN binding"/>
    <property type="evidence" value="ECO:0000318"/>
    <property type="project" value="GO_Central"/>
</dbReference>
<dbReference type="GO" id="GO:0036211">
    <property type="term" value="P:protein modification process"/>
    <property type="evidence" value="ECO:0007669"/>
    <property type="project" value="InterPro"/>
</dbReference>
<dbReference type="Gene3D" id="3.40.50.360">
    <property type="match status" value="1"/>
</dbReference>
<dbReference type="HAMAP" id="MF_00128">
    <property type="entry name" value="NrdI"/>
    <property type="match status" value="1"/>
</dbReference>
<dbReference type="InterPro" id="IPR029039">
    <property type="entry name" value="Flavoprotein-like_sf"/>
</dbReference>
<dbReference type="InterPro" id="IPR020852">
    <property type="entry name" value="RNR_Ib_NrdI_bac"/>
</dbReference>
<dbReference type="InterPro" id="IPR004465">
    <property type="entry name" value="RNR_NrdI"/>
</dbReference>
<dbReference type="NCBIfam" id="TIGR00333">
    <property type="entry name" value="nrdI"/>
    <property type="match status" value="1"/>
</dbReference>
<dbReference type="PANTHER" id="PTHR37297">
    <property type="entry name" value="PROTEIN NRDI"/>
    <property type="match status" value="1"/>
</dbReference>
<dbReference type="PANTHER" id="PTHR37297:SF1">
    <property type="entry name" value="PROTEIN NRDI"/>
    <property type="match status" value="1"/>
</dbReference>
<dbReference type="Pfam" id="PF07972">
    <property type="entry name" value="Flavodoxin_NdrI"/>
    <property type="match status" value="1"/>
</dbReference>
<dbReference type="PIRSF" id="PIRSF005087">
    <property type="entry name" value="NrdI"/>
    <property type="match status" value="1"/>
</dbReference>
<dbReference type="SUPFAM" id="SSF52218">
    <property type="entry name" value="Flavoproteins"/>
    <property type="match status" value="1"/>
</dbReference>